<name>GRPE_LEPBJ</name>
<proteinExistence type="inferred from homology"/>
<accession>Q04VC9</accession>
<reference key="1">
    <citation type="journal article" date="2006" name="Proc. Natl. Acad. Sci. U.S.A.">
        <title>Genome reduction in Leptospira borgpetersenii reflects limited transmission potential.</title>
        <authorList>
            <person name="Bulach D.M."/>
            <person name="Zuerner R.L."/>
            <person name="Wilson P."/>
            <person name="Seemann T."/>
            <person name="McGrath A."/>
            <person name="Cullen P.A."/>
            <person name="Davis J."/>
            <person name="Johnson M."/>
            <person name="Kuczek E."/>
            <person name="Alt D.P."/>
            <person name="Peterson-Burch B."/>
            <person name="Coppel R.L."/>
            <person name="Rood J.I."/>
            <person name="Davies J.K."/>
            <person name="Adler B."/>
        </authorList>
    </citation>
    <scope>NUCLEOTIDE SEQUENCE [LARGE SCALE GENOMIC DNA]</scope>
    <source>
        <strain>JB197</strain>
    </source>
</reference>
<feature type="chain" id="PRO_1000053600" description="Protein GrpE">
    <location>
        <begin position="1"/>
        <end position="217"/>
    </location>
</feature>
<feature type="region of interest" description="Disordered" evidence="2">
    <location>
        <begin position="1"/>
        <end position="63"/>
    </location>
</feature>
<feature type="compositionally biased region" description="Basic and acidic residues" evidence="2">
    <location>
        <begin position="10"/>
        <end position="32"/>
    </location>
</feature>
<feature type="compositionally biased region" description="Low complexity" evidence="2">
    <location>
        <begin position="37"/>
        <end position="63"/>
    </location>
</feature>
<dbReference type="EMBL" id="CP000350">
    <property type="protein sequence ID" value="ABJ75141.1"/>
    <property type="molecule type" value="Genomic_DNA"/>
</dbReference>
<dbReference type="RefSeq" id="WP_002723296.1">
    <property type="nucleotide sequence ID" value="NC_008510.1"/>
</dbReference>
<dbReference type="SMR" id="Q04VC9"/>
<dbReference type="GeneID" id="61172628"/>
<dbReference type="KEGG" id="lbj:LBJ_0432"/>
<dbReference type="HOGENOM" id="CLU_057217_5_2_12"/>
<dbReference type="Proteomes" id="UP000000656">
    <property type="component" value="Chromosome 1"/>
</dbReference>
<dbReference type="GO" id="GO:0005737">
    <property type="term" value="C:cytoplasm"/>
    <property type="evidence" value="ECO:0007669"/>
    <property type="project" value="UniProtKB-SubCell"/>
</dbReference>
<dbReference type="GO" id="GO:0000774">
    <property type="term" value="F:adenyl-nucleotide exchange factor activity"/>
    <property type="evidence" value="ECO:0007669"/>
    <property type="project" value="InterPro"/>
</dbReference>
<dbReference type="GO" id="GO:0042803">
    <property type="term" value="F:protein homodimerization activity"/>
    <property type="evidence" value="ECO:0007669"/>
    <property type="project" value="InterPro"/>
</dbReference>
<dbReference type="GO" id="GO:0051087">
    <property type="term" value="F:protein-folding chaperone binding"/>
    <property type="evidence" value="ECO:0007669"/>
    <property type="project" value="InterPro"/>
</dbReference>
<dbReference type="GO" id="GO:0051082">
    <property type="term" value="F:unfolded protein binding"/>
    <property type="evidence" value="ECO:0007669"/>
    <property type="project" value="TreeGrafter"/>
</dbReference>
<dbReference type="GO" id="GO:0006457">
    <property type="term" value="P:protein folding"/>
    <property type="evidence" value="ECO:0007669"/>
    <property type="project" value="InterPro"/>
</dbReference>
<dbReference type="CDD" id="cd00446">
    <property type="entry name" value="GrpE"/>
    <property type="match status" value="1"/>
</dbReference>
<dbReference type="FunFam" id="2.30.22.10:FF:000006">
    <property type="entry name" value="Protein GrpE"/>
    <property type="match status" value="1"/>
</dbReference>
<dbReference type="Gene3D" id="3.90.20.20">
    <property type="match status" value="1"/>
</dbReference>
<dbReference type="Gene3D" id="2.30.22.10">
    <property type="entry name" value="Head domain of nucleotide exchange factor GrpE"/>
    <property type="match status" value="1"/>
</dbReference>
<dbReference type="HAMAP" id="MF_01151">
    <property type="entry name" value="GrpE"/>
    <property type="match status" value="1"/>
</dbReference>
<dbReference type="InterPro" id="IPR000740">
    <property type="entry name" value="GrpE"/>
</dbReference>
<dbReference type="InterPro" id="IPR013805">
    <property type="entry name" value="GrpE_coiled_coil"/>
</dbReference>
<dbReference type="InterPro" id="IPR009012">
    <property type="entry name" value="GrpE_head"/>
</dbReference>
<dbReference type="NCBIfam" id="NF010744">
    <property type="entry name" value="PRK14146.1"/>
    <property type="match status" value="1"/>
</dbReference>
<dbReference type="PANTHER" id="PTHR21237">
    <property type="entry name" value="GRPE PROTEIN"/>
    <property type="match status" value="1"/>
</dbReference>
<dbReference type="PANTHER" id="PTHR21237:SF23">
    <property type="entry name" value="GRPE PROTEIN HOMOLOG, MITOCHONDRIAL"/>
    <property type="match status" value="1"/>
</dbReference>
<dbReference type="Pfam" id="PF01025">
    <property type="entry name" value="GrpE"/>
    <property type="match status" value="1"/>
</dbReference>
<dbReference type="PRINTS" id="PR00773">
    <property type="entry name" value="GRPEPROTEIN"/>
</dbReference>
<dbReference type="SUPFAM" id="SSF58014">
    <property type="entry name" value="Coiled-coil domain of nucleotide exchange factor GrpE"/>
    <property type="match status" value="1"/>
</dbReference>
<dbReference type="SUPFAM" id="SSF51064">
    <property type="entry name" value="Head domain of nucleotide exchange factor GrpE"/>
    <property type="match status" value="1"/>
</dbReference>
<dbReference type="PROSITE" id="PS01071">
    <property type="entry name" value="GRPE"/>
    <property type="match status" value="1"/>
</dbReference>
<sequence>MAETSNSENKTSEEAKASEKNSRSITLEETKLENMNSEESTQTTESTQAQAAEAADSELSLQSELDAAKKEVESLKDSWARERAEFQNFKRRSAQEFVSIRKEAVKSLVSGFLNPIDNLERVGATQSPSEELKPFVEGVAMILKEFYAVLEKSNVIRFDPKGESFDPMSMEALSSEEGDQYSEETVIDVYQAGYYYKENEDKFTLRPARVRIGKPKS</sequence>
<organism>
    <name type="scientific">Leptospira borgpetersenii serovar Hardjo-bovis (strain JB197)</name>
    <dbReference type="NCBI Taxonomy" id="355277"/>
    <lineage>
        <taxon>Bacteria</taxon>
        <taxon>Pseudomonadati</taxon>
        <taxon>Spirochaetota</taxon>
        <taxon>Spirochaetia</taxon>
        <taxon>Leptospirales</taxon>
        <taxon>Leptospiraceae</taxon>
        <taxon>Leptospira</taxon>
    </lineage>
</organism>
<evidence type="ECO:0000255" key="1">
    <source>
        <dbReference type="HAMAP-Rule" id="MF_01151"/>
    </source>
</evidence>
<evidence type="ECO:0000256" key="2">
    <source>
        <dbReference type="SAM" id="MobiDB-lite"/>
    </source>
</evidence>
<comment type="function">
    <text evidence="1">Participates actively in the response to hyperosmotic and heat shock by preventing the aggregation of stress-denatured proteins, in association with DnaK and GrpE. It is the nucleotide exchange factor for DnaK and may function as a thermosensor. Unfolded proteins bind initially to DnaJ; upon interaction with the DnaJ-bound protein, DnaK hydrolyzes its bound ATP, resulting in the formation of a stable complex. GrpE releases ADP from DnaK; ATP binding to DnaK triggers the release of the substrate protein, thus completing the reaction cycle. Several rounds of ATP-dependent interactions between DnaJ, DnaK and GrpE are required for fully efficient folding.</text>
</comment>
<comment type="subunit">
    <text evidence="1">Homodimer.</text>
</comment>
<comment type="subcellular location">
    <subcellularLocation>
        <location evidence="1">Cytoplasm</location>
    </subcellularLocation>
</comment>
<comment type="similarity">
    <text evidence="1">Belongs to the GrpE family.</text>
</comment>
<protein>
    <recommendedName>
        <fullName evidence="1">Protein GrpE</fullName>
    </recommendedName>
    <alternativeName>
        <fullName evidence="1">HSP-70 cofactor</fullName>
    </alternativeName>
</protein>
<keyword id="KW-0143">Chaperone</keyword>
<keyword id="KW-0963">Cytoplasm</keyword>
<keyword id="KW-0346">Stress response</keyword>
<gene>
    <name evidence="1" type="primary">grpE</name>
    <name type="ordered locus">LBJ_0432</name>
</gene>